<reference key="1">
    <citation type="submission" date="2005-03" db="EMBL/GenBank/DDBJ databases">
        <title>Comparison of the complete genome sequences of Rhodococcus erythropolis PR4 and Rhodococcus opacus B4.</title>
        <authorList>
            <person name="Takarada H."/>
            <person name="Sekine M."/>
            <person name="Hosoyama A."/>
            <person name="Yamada R."/>
            <person name="Fujisawa T."/>
            <person name="Omata S."/>
            <person name="Shimizu A."/>
            <person name="Tsukatani N."/>
            <person name="Tanikawa S."/>
            <person name="Fujita N."/>
            <person name="Harayama S."/>
        </authorList>
    </citation>
    <scope>NUCLEOTIDE SEQUENCE [LARGE SCALE GENOMIC DNA]</scope>
    <source>
        <strain>PR4 / NBRC 100887</strain>
    </source>
</reference>
<accession>C1A2R3</accession>
<protein>
    <recommendedName>
        <fullName evidence="1">1D-myo-inositol 2-acetamido-2-deoxy-alpha-D-glucopyranoside deacetylase</fullName>
        <shortName evidence="1">GlcNAc-Ins deacetylase</shortName>
        <ecNumber evidence="1">3.5.1.103</ecNumber>
    </recommendedName>
    <alternativeName>
        <fullName>N-acetyl-1-D-myo-inositol 2-amino-2-deoxy-alpha-D-glucopyranoside deacetylase</fullName>
    </alternativeName>
</protein>
<feature type="chain" id="PRO_0000400214" description="1D-myo-inositol 2-acetamido-2-deoxy-alpha-D-glucopyranoside deacetylase">
    <location>
        <begin position="1"/>
        <end position="294"/>
    </location>
</feature>
<feature type="binding site" evidence="1">
    <location>
        <position position="14"/>
    </location>
    <ligand>
        <name>Zn(2+)</name>
        <dbReference type="ChEBI" id="CHEBI:29105"/>
    </ligand>
</feature>
<feature type="binding site" evidence="1">
    <location>
        <position position="17"/>
    </location>
    <ligand>
        <name>Zn(2+)</name>
        <dbReference type="ChEBI" id="CHEBI:29105"/>
    </ligand>
</feature>
<feature type="binding site" evidence="1">
    <location>
        <position position="149"/>
    </location>
    <ligand>
        <name>Zn(2+)</name>
        <dbReference type="ChEBI" id="CHEBI:29105"/>
    </ligand>
</feature>
<evidence type="ECO:0000255" key="1">
    <source>
        <dbReference type="HAMAP-Rule" id="MF_01696"/>
    </source>
</evidence>
<comment type="function">
    <text evidence="1">Catalyzes the deacetylation of 1D-myo-inositol 2-acetamido-2-deoxy-alpha-D-glucopyranoside (GlcNAc-Ins) in the mycothiol biosynthesis pathway.</text>
</comment>
<comment type="catalytic activity">
    <reaction evidence="1">
        <text>1D-myo-inositol 2-acetamido-2-deoxy-alpha-D-glucopyranoside + H2O = 1D-myo-inositol 2-amino-2-deoxy-alpha-D-glucopyranoside + acetate</text>
        <dbReference type="Rhea" id="RHEA:26180"/>
        <dbReference type="ChEBI" id="CHEBI:15377"/>
        <dbReference type="ChEBI" id="CHEBI:30089"/>
        <dbReference type="ChEBI" id="CHEBI:52442"/>
        <dbReference type="ChEBI" id="CHEBI:58886"/>
        <dbReference type="EC" id="3.5.1.103"/>
    </reaction>
</comment>
<comment type="cofactor">
    <cofactor evidence="1">
        <name>Zn(2+)</name>
        <dbReference type="ChEBI" id="CHEBI:29105"/>
    </cofactor>
    <text evidence="1">Binds 1 zinc ion per subunit.</text>
</comment>
<comment type="similarity">
    <text evidence="1">Belongs to the MshB deacetylase family.</text>
</comment>
<organism>
    <name type="scientific">Rhodococcus erythropolis (strain PR4 / NBRC 100887)</name>
    <dbReference type="NCBI Taxonomy" id="234621"/>
    <lineage>
        <taxon>Bacteria</taxon>
        <taxon>Bacillati</taxon>
        <taxon>Actinomycetota</taxon>
        <taxon>Actinomycetes</taxon>
        <taxon>Mycobacteriales</taxon>
        <taxon>Nocardiaceae</taxon>
        <taxon>Rhodococcus</taxon>
        <taxon>Rhodococcus erythropolis group</taxon>
    </lineage>
</organism>
<sequence>MTASAKRLLLVHAHPDDETITTGGTIARYASEGADVTVLTCTLGEEGEVIGDAWAGLVAAEADQLGGYRIAELSAALSALGSAAPRFLAGAGRYRDSGMIGTPSAANPRAFVNARLDEAVSAVVAVIREIRPHVVITYDPNGGYGHPDHIQAHAITTAAVEAAATAAYPEAGEPWSTPKFYWTVTERSGLERGIAAISEFPENWRLPEPGELPSVEDSDVTTAIDVRGVINAKARALSAHATQVTVAPSGAEFALSNNVVQPILTVEHFVLAAGTLGPVGEDGRERDLFGGLHS</sequence>
<name>MSHB_RHOE4</name>
<keyword id="KW-0378">Hydrolase</keyword>
<keyword id="KW-0479">Metal-binding</keyword>
<keyword id="KW-0862">Zinc</keyword>
<dbReference type="EC" id="3.5.1.103" evidence="1"/>
<dbReference type="EMBL" id="AP008957">
    <property type="protein sequence ID" value="BAH34898.1"/>
    <property type="molecule type" value="Genomic_DNA"/>
</dbReference>
<dbReference type="RefSeq" id="WP_020908486.1">
    <property type="nucleotide sequence ID" value="NC_012490.1"/>
</dbReference>
<dbReference type="SMR" id="C1A2R3"/>
<dbReference type="KEGG" id="rer:RER_41900"/>
<dbReference type="PATRIC" id="fig|234621.6.peg.4728"/>
<dbReference type="eggNOG" id="COG2120">
    <property type="taxonomic scope" value="Bacteria"/>
</dbReference>
<dbReference type="HOGENOM" id="CLU_049311_2_1_11"/>
<dbReference type="Proteomes" id="UP000002204">
    <property type="component" value="Chromosome"/>
</dbReference>
<dbReference type="GO" id="GO:0035595">
    <property type="term" value="F:N-acetylglucosaminylinositol deacetylase activity"/>
    <property type="evidence" value="ECO:0007669"/>
    <property type="project" value="UniProtKB-EC"/>
</dbReference>
<dbReference type="GO" id="GO:0008270">
    <property type="term" value="F:zinc ion binding"/>
    <property type="evidence" value="ECO:0007669"/>
    <property type="project" value="UniProtKB-UniRule"/>
</dbReference>
<dbReference type="GO" id="GO:0010125">
    <property type="term" value="P:mycothiol biosynthetic process"/>
    <property type="evidence" value="ECO:0007669"/>
    <property type="project" value="UniProtKB-UniRule"/>
</dbReference>
<dbReference type="Gene3D" id="3.40.50.10320">
    <property type="entry name" value="LmbE-like"/>
    <property type="match status" value="1"/>
</dbReference>
<dbReference type="HAMAP" id="MF_01696">
    <property type="entry name" value="MshB"/>
    <property type="match status" value="1"/>
</dbReference>
<dbReference type="InterPro" id="IPR003737">
    <property type="entry name" value="GlcNAc_PI_deacetylase-related"/>
</dbReference>
<dbReference type="InterPro" id="IPR024078">
    <property type="entry name" value="LmbE-like_dom_sf"/>
</dbReference>
<dbReference type="InterPro" id="IPR017810">
    <property type="entry name" value="Mycothiol_biosynthesis_MshB"/>
</dbReference>
<dbReference type="NCBIfam" id="TIGR03445">
    <property type="entry name" value="mycothiol_MshB"/>
    <property type="match status" value="1"/>
</dbReference>
<dbReference type="PANTHER" id="PTHR12993:SF26">
    <property type="entry name" value="1D-MYO-INOSITOL 2-ACETAMIDO-2-DEOXY-ALPHA-D-GLUCOPYRANOSIDE DEACETYLASE"/>
    <property type="match status" value="1"/>
</dbReference>
<dbReference type="PANTHER" id="PTHR12993">
    <property type="entry name" value="N-ACETYLGLUCOSAMINYL-PHOSPHATIDYLINOSITOL DE-N-ACETYLASE-RELATED"/>
    <property type="match status" value="1"/>
</dbReference>
<dbReference type="Pfam" id="PF02585">
    <property type="entry name" value="PIG-L"/>
    <property type="match status" value="1"/>
</dbReference>
<dbReference type="SUPFAM" id="SSF102588">
    <property type="entry name" value="LmbE-like"/>
    <property type="match status" value="1"/>
</dbReference>
<gene>
    <name evidence="1" type="primary">mshB</name>
    <name type="ordered locus">RER_41900</name>
</gene>
<proteinExistence type="inferred from homology"/>